<proteinExistence type="inferred from homology"/>
<comment type="similarity">
    <text evidence="1">Belongs to the bacterial ribosomal protein bL34 family.</text>
</comment>
<protein>
    <recommendedName>
        <fullName evidence="1">Large ribosomal subunit protein bL34</fullName>
    </recommendedName>
    <alternativeName>
        <fullName>50S ribosomal protein L34</fullName>
    </alternativeName>
</protein>
<evidence type="ECO:0000305" key="1"/>
<accession>Q9ZB91</accession>
<gene>
    <name type="primary">rpmH</name>
</gene>
<keyword id="KW-0687">Ribonucleoprotein</keyword>
<keyword id="KW-0689">Ribosomal protein</keyword>
<dbReference type="EMBL" id="U19185">
    <property type="protein sequence ID" value="AAC83391.1"/>
    <property type="molecule type" value="Genomic_DNA"/>
</dbReference>
<dbReference type="SMR" id="Q9ZB91"/>
<dbReference type="GO" id="GO:1990904">
    <property type="term" value="C:ribonucleoprotein complex"/>
    <property type="evidence" value="ECO:0007669"/>
    <property type="project" value="UniProtKB-KW"/>
</dbReference>
<dbReference type="GO" id="GO:0005840">
    <property type="term" value="C:ribosome"/>
    <property type="evidence" value="ECO:0007669"/>
    <property type="project" value="UniProtKB-KW"/>
</dbReference>
<dbReference type="GO" id="GO:0003735">
    <property type="term" value="F:structural constituent of ribosome"/>
    <property type="evidence" value="ECO:0007669"/>
    <property type="project" value="InterPro"/>
</dbReference>
<dbReference type="GO" id="GO:0006412">
    <property type="term" value="P:translation"/>
    <property type="evidence" value="ECO:0007669"/>
    <property type="project" value="UniProtKB-UniRule"/>
</dbReference>
<dbReference type="Gene3D" id="1.10.287.3980">
    <property type="match status" value="1"/>
</dbReference>
<dbReference type="HAMAP" id="MF_00391">
    <property type="entry name" value="Ribosomal_bL34"/>
    <property type="match status" value="1"/>
</dbReference>
<dbReference type="InterPro" id="IPR000271">
    <property type="entry name" value="Ribosomal_bL34"/>
</dbReference>
<dbReference type="InterPro" id="IPR020939">
    <property type="entry name" value="Ribosomal_bL34_CS"/>
</dbReference>
<dbReference type="NCBIfam" id="TIGR01030">
    <property type="entry name" value="rpmH_bact"/>
    <property type="match status" value="1"/>
</dbReference>
<dbReference type="Pfam" id="PF00468">
    <property type="entry name" value="Ribosomal_L34"/>
    <property type="match status" value="1"/>
</dbReference>
<dbReference type="PROSITE" id="PS00784">
    <property type="entry name" value="RIBOSOMAL_L34"/>
    <property type="match status" value="1"/>
</dbReference>
<organism>
    <name type="scientific">Mycobacterium avium</name>
    <dbReference type="NCBI Taxonomy" id="1764"/>
    <lineage>
        <taxon>Bacteria</taxon>
        <taxon>Bacillati</taxon>
        <taxon>Actinomycetota</taxon>
        <taxon>Actinomycetes</taxon>
        <taxon>Mycobacteriales</taxon>
        <taxon>Mycobacteriaceae</taxon>
        <taxon>Mycobacterium</taxon>
        <taxon>Mycobacterium avium complex (MAC)</taxon>
    </lineage>
</organism>
<reference key="1">
    <citation type="submission" date="1998-12" db="EMBL/GenBank/DDBJ databases">
        <authorList>
            <person name="Rajagopalan M."/>
        </authorList>
    </citation>
    <scope>NUCLEOTIDE SEQUENCE [GENOMIC DNA]</scope>
</reference>
<name>RL34_MYCAV</name>
<sequence>MAKGKRTFQPNNRRRARVHGFRLRMRNSGRAIVSGRRRKGRRALSA</sequence>
<feature type="chain" id="PRO_0000187410" description="Large ribosomal subunit protein bL34">
    <location>
        <begin position="1"/>
        <end position="46"/>
    </location>
</feature>